<organism>
    <name type="scientific">Simian virus 40</name>
    <name type="common">SV40</name>
    <dbReference type="NCBI Taxonomy" id="1891767"/>
    <lineage>
        <taxon>Viruses</taxon>
        <taxon>Monodnaviria</taxon>
        <taxon>Shotokuvirae</taxon>
        <taxon>Cossaviricota</taxon>
        <taxon>Papovaviricetes</taxon>
        <taxon>Sepolyvirales</taxon>
        <taxon>Polyomaviridae</taxon>
        <taxon>Betapolyomavirus</taxon>
    </lineage>
</organism>
<keyword id="KW-0024">Alternative initiation</keyword>
<keyword id="KW-0025">Alternative splicing</keyword>
<keyword id="KW-1032">Host cell membrane</keyword>
<keyword id="KW-1035">Host cytoplasm</keyword>
<keyword id="KW-1038">Host endoplasmic reticulum</keyword>
<keyword id="KW-1043">Host membrane</keyword>
<keyword id="KW-1048">Host nucleus</keyword>
<keyword id="KW-0945">Host-virus interaction</keyword>
<keyword id="KW-0407">Ion channel</keyword>
<keyword id="KW-0406">Ion transport</keyword>
<keyword id="KW-0472">Membrane</keyword>
<keyword id="KW-0597">Phosphoprotein</keyword>
<keyword id="KW-1185">Reference proteome</keyword>
<keyword id="KW-0735">Signal-anchor</keyword>
<keyword id="KW-0812">Transmembrane</keyword>
<keyword id="KW-1133">Transmembrane helix</keyword>
<keyword id="KW-0813">Transport</keyword>
<keyword id="KW-1182">Viral ion channel</keyword>
<organismHost>
    <name type="scientific">Macaca</name>
    <name type="common">macaques</name>
    <dbReference type="NCBI Taxonomy" id="9539"/>
</organismHost>
<sequence>MVLRRLSRQASVKVRRSWTESKKTAQRLFVFVLELLLQFCEGEDTVDGKRKKPERLTEKPES</sequence>
<accession>P03084</accession>
<reference key="1">
    <citation type="journal article" date="1978" name="Science">
        <title>The genome of simian virus 40.</title>
        <authorList>
            <person name="Reddy V.B."/>
            <person name="Thimmappaya B."/>
            <person name="Dhar R."/>
            <person name="Subramanian K.N."/>
            <person name="Zain B.S."/>
            <person name="Pan J."/>
            <person name="Ghosh P.K."/>
            <person name="Celma M.L."/>
            <person name="Weissman S.M."/>
        </authorList>
    </citation>
    <scope>NUCLEOTIDE SEQUENCE [GENOMIC DNA]</scope>
    <source>
        <strain>A2895</strain>
    </source>
</reference>
<reference key="2">
    <citation type="journal article" date="1978" name="Nature">
        <title>Complete nucleotide sequence of SV40 DNA.</title>
        <authorList>
            <person name="Fiers W."/>
            <person name="Contreras R."/>
            <person name="Haegeman G."/>
            <person name="Rogiers R."/>
            <person name="van de Voorde A."/>
            <person name="van Heuverswyn H."/>
            <person name="van Herreweghe J."/>
            <person name="Volckaert G."/>
            <person name="Ysebaert M."/>
        </authorList>
    </citation>
    <scope>NUCLEOTIDE SEQUENCE [GENOMIC DNA]</scope>
    <source>
        <strain>776</strain>
        <strain>A2895</strain>
    </source>
</reference>
<reference key="3">
    <citation type="journal article" date="1992" name="J. Virol.">
        <title>Genetic analysis of simian virus 40 from brains and kidneys of macaque monkeys.</title>
        <authorList>
            <person name="Ilyinskii P.O."/>
            <person name="Daniel M.D."/>
            <person name="Horvath C."/>
            <person name="Desrosiers R.C."/>
        </authorList>
    </citation>
    <scope>NUCLEOTIDE SEQUENCE [GENOMIC DNA]</scope>
    <source>
        <strain>A2895</strain>
    </source>
</reference>
<reference key="4">
    <citation type="journal article" date="1978" name="Nature">
        <title>Evidence for 'splicing' of SV40 16S mRNA.</title>
        <authorList>
            <person name="Haegeman G."/>
            <person name="Fiers W."/>
        </authorList>
    </citation>
    <scope>ALTERNATIVE SPLICING</scope>
</reference>
<reference key="5">
    <citation type="journal article" date="1981" name="Nature">
        <title>Identification of the SV40 agnogene product: a DNA binding protein.</title>
        <authorList>
            <person name="Jay G."/>
            <person name="Nomura S."/>
            <person name="Anderson C.W."/>
            <person name="Khoury G."/>
        </authorList>
    </citation>
    <scope>PRELIMINARY CHARACTERIZATION</scope>
</reference>
<reference key="6">
    <citation type="journal article" date="1981" name="Proc. Natl. Acad. Sci. U.S.A.">
        <title>Use of whole-cell fixation to visualize replicating and maturing simian virus 40: identification of new viral gene product.</title>
        <authorList>
            <person name="Jackson V."/>
            <person name="Chalkley R."/>
        </authorList>
    </citation>
    <scope>PHOSPHORYLATION</scope>
</reference>
<reference key="7">
    <citation type="journal article" date="1982" name="Cell">
        <title>Attenuation in the control of SV40 gene expression.</title>
        <authorList>
            <person name="Hay N."/>
            <person name="Skolnik-David H."/>
            <person name="Aloni Y."/>
        </authorList>
    </citation>
    <scope>FUNCTION</scope>
</reference>
<reference key="8">
    <citation type="journal article" date="1983" name="J. Virol.">
        <title>Subcellular localization of the simian virus 40 agnoprotein.</title>
        <authorList>
            <person name="Nomura S."/>
            <person name="Khoury G."/>
            <person name="Jay G."/>
        </authorList>
    </citation>
    <scope>SUBCELLULAR LOCATION</scope>
</reference>
<reference key="9">
    <citation type="journal article" date="1986" name="J. Virol.">
        <title>Simian virus 40 agnoprotein facilitates perinuclear-nuclear localization of VP1, the major capsid protein.</title>
        <authorList>
            <person name="Carswell S."/>
            <person name="Alwine J.C."/>
        </authorList>
    </citation>
    <scope>FUNCTION</scope>
</reference>
<reference key="10">
    <citation type="journal article" date="1986" name="J. Virol.">
        <title>Simian virus 40 agnoprotein facilitates normal nuclear location of the major capsid polypeptide and cell-to-cell spread of virus.</title>
        <authorList>
            <person name="Resnick J."/>
            <person name="Shenk T."/>
        </authorList>
    </citation>
    <scope>FUNCTION</scope>
</reference>
<reference key="11">
    <citation type="journal article" date="2005" name="J. Cell. Physiol.">
        <title>The agnoprotein of polyomaviruses: a multifunctional auxiliary protein.</title>
        <authorList>
            <person name="Khalili K."/>
            <person name="White M.K."/>
            <person name="Sawa H."/>
            <person name="Nagashima K."/>
            <person name="Safak M."/>
        </authorList>
    </citation>
    <scope>REVIEW</scope>
</reference>
<proteinExistence type="evidence at protein level"/>
<comment type="function">
    <text evidence="1 3 4 5">Alters the structure of the nuclear envelope by interacting with host CBX5 and disrupting CBX5 association with LBR. Involved in the perinuclear-nuclear localization of the capsid protein VP1 during virion assembly and maturation. Plays an important role in the release of progeny virions from infected cells and in viral propagation, probably by acting as a viral ionic channel in the host plasma membrane. Allows influx of extracellular calcium ions in the host cell. May contribute to viral genome transcription and translation of viral late proteins (By similarity).</text>
</comment>
<comment type="subunit">
    <text evidence="1">Homooligomer. Interacts with VP1 (By similarity). Interacts with large T antigen; this interaction may impact upon the activity of T-antigen on the control of viral gene transcription and replication. Interacts with small t antigen. Interacts with host CBX5; this interaction induces the dissociation of CBX5 from LBR, resulting in destabilization of the nuclear envelope (By similarity).</text>
</comment>
<comment type="subcellular location">
    <subcellularLocation>
        <location evidence="7">Host cytoplasm</location>
    </subcellularLocation>
    <subcellularLocation>
        <location evidence="7">Host nucleus membrane</location>
        <topology evidence="7">Single-pass type II membrane protein</topology>
    </subcellularLocation>
    <subcellularLocation>
        <location evidence="7">Host rough endoplasmic reticulum membrane</location>
        <topology evidence="7">Single-pass type II membrane protein</topology>
    </subcellularLocation>
    <subcellularLocation>
        <location evidence="7">Host cell membrane</location>
        <topology evidence="7">Single-pass type II membrane protein</topology>
    </subcellularLocation>
    <text evidence="6">Mostly perinuclear.</text>
</comment>
<comment type="alternative products">
    <event type="alternative splicing"/>
    <event type="alternative initiation"/>
    <isoform>
        <id>P03084-1</id>
        <name>Agno</name>
        <sequence type="displayed"/>
    </isoform>
    <isoform>
        <id>P03087-1</id>
        <name>VP1</name>
        <name>Major capsid protein VP1</name>
        <sequence type="external"/>
    </isoform>
    <isoform>
        <id>P03093-1</id>
        <name>VP2</name>
        <name>Minor capsid protein VP2</name>
        <sequence type="external"/>
    </isoform>
    <isoform>
        <id>P03093-2</id>
        <name>VP3</name>
        <name>Minor capsid protein VP3</name>
        <sequence type="external"/>
    </isoform>
    <isoform>
        <id>P03093-3</id>
        <name>VP4</name>
        <name>Viroporin VP4</name>
        <sequence type="external"/>
    </isoform>
</comment>
<comment type="PTM">
    <text evidence="1">Phosphorylated by host kinase. Phosphorylation segregates agnoprotein in cytoplasm, whereas unphosphorylated agnoprotein migrate to the nucleus (By similarity).</text>
</comment>
<comment type="miscellaneous">
    <molecule>Isoform Agno</molecule>
    <text>Produced by alternative initiation of the late mRNA (16s and 19s mRNAs).</text>
</comment>
<comment type="similarity">
    <text evidence="7">Belongs to the polyomaviruses agnoprotein family.</text>
</comment>
<feature type="chain" id="PRO_0000115034" description="Agnoprotein">
    <location>
        <begin position="1"/>
        <end position="62"/>
    </location>
</feature>
<feature type="topological domain" description="Cytoplasmic" evidence="2">
    <location>
        <begin position="1"/>
        <end position="23"/>
    </location>
</feature>
<feature type="transmembrane region" description="Helical; Signal-anchor for type II membrane protein" evidence="2">
    <location>
        <begin position="24"/>
        <end position="40"/>
    </location>
</feature>
<feature type="topological domain" description="Extracellular" evidence="2">
    <location>
        <begin position="41"/>
        <end position="62"/>
    </location>
</feature>
<feature type="sequence conflict" description="In Ref. 3; AAB59800." evidence="7" ref="3">
    <original>Q</original>
    <variation>R</variation>
    <location>
        <position position="26"/>
    </location>
</feature>
<protein>
    <recommendedName>
        <fullName>Agnoprotein</fullName>
    </recommendedName>
</protein>
<name>AGNO_SV40</name>
<evidence type="ECO:0000250" key="1"/>
<evidence type="ECO:0000255" key="2"/>
<evidence type="ECO:0000269" key="3">
    <source>
    </source>
</evidence>
<evidence type="ECO:0000269" key="4">
    <source>
    </source>
</evidence>
<evidence type="ECO:0000269" key="5">
    <source>
    </source>
</evidence>
<evidence type="ECO:0000269" key="6">
    <source>
    </source>
</evidence>
<evidence type="ECO:0000305" key="7"/>
<dbReference type="EMBL" id="M99357">
    <property type="protein sequence ID" value="AAB59791.1"/>
    <property type="molecule type" value="Genomic_DNA"/>
</dbReference>
<dbReference type="EMBL" id="M99359">
    <property type="protein sequence ID" value="AAB59794.1"/>
    <property type="molecule type" value="Genomic_DNA"/>
</dbReference>
<dbReference type="EMBL" id="M99361">
    <property type="protein sequence ID" value="AAB59777.1"/>
    <property type="molecule type" value="Genomic_DNA"/>
</dbReference>
<dbReference type="EMBL" id="M99363">
    <property type="protein sequence ID" value="AAB59778.1"/>
    <property type="molecule type" value="Genomic_DNA"/>
</dbReference>
<dbReference type="EMBL" id="J02400">
    <property type="protein sequence ID" value="AAB59920.1"/>
    <property type="molecule type" value="Genomic_DNA"/>
</dbReference>
<dbReference type="EMBL" id="M99346">
    <property type="protein sequence ID" value="AAB59800.1"/>
    <property type="molecule type" value="Genomic_DNA"/>
</dbReference>
<dbReference type="PIR" id="D03631">
    <property type="entry name" value="DNVPA4"/>
</dbReference>
<dbReference type="RefSeq" id="NP_043123.1">
    <molecule id="P03084-1"/>
    <property type="nucleotide sequence ID" value="NC_001669.1"/>
</dbReference>
<dbReference type="RefSeq" id="YP_003708378.1">
    <property type="nucleotide sequence ID" value="NC_001669.1"/>
</dbReference>
<dbReference type="SMR" id="P03084"/>
<dbReference type="GeneID" id="29031015"/>
<dbReference type="Proteomes" id="UP000007705">
    <property type="component" value="Genome"/>
</dbReference>
<dbReference type="GO" id="GO:0044200">
    <property type="term" value="C:host cell nuclear membrane"/>
    <property type="evidence" value="ECO:0007669"/>
    <property type="project" value="UniProtKB-SubCell"/>
</dbReference>
<dbReference type="GO" id="GO:0020002">
    <property type="term" value="C:host cell plasma membrane"/>
    <property type="evidence" value="ECO:0007669"/>
    <property type="project" value="UniProtKB-SubCell"/>
</dbReference>
<dbReference type="GO" id="GO:0044169">
    <property type="term" value="C:host cell rough endoplasmic reticulum membrane"/>
    <property type="evidence" value="ECO:0007669"/>
    <property type="project" value="UniProtKB-SubCell"/>
</dbReference>
<dbReference type="GO" id="GO:0016020">
    <property type="term" value="C:membrane"/>
    <property type="evidence" value="ECO:0007669"/>
    <property type="project" value="UniProtKB-KW"/>
</dbReference>
<dbReference type="GO" id="GO:0015267">
    <property type="term" value="F:channel activity"/>
    <property type="evidence" value="ECO:0007669"/>
    <property type="project" value="UniProtKB-KW"/>
</dbReference>
<dbReference type="GO" id="GO:0003677">
    <property type="term" value="F:DNA binding"/>
    <property type="evidence" value="ECO:0007669"/>
    <property type="project" value="InterPro"/>
</dbReference>
<dbReference type="GO" id="GO:0034220">
    <property type="term" value="P:monoatomic ion transmembrane transport"/>
    <property type="evidence" value="ECO:0007669"/>
    <property type="project" value="UniProtKB-KW"/>
</dbReference>
<dbReference type="InterPro" id="IPR002643">
    <property type="entry name" value="Polyoma_agno"/>
</dbReference>
<dbReference type="Pfam" id="PF01736">
    <property type="entry name" value="Polyoma_agno"/>
    <property type="match status" value="1"/>
</dbReference>